<gene>
    <name evidence="1" type="primary">purA</name>
    <name type="ordered locus">Noc_2585</name>
</gene>
<proteinExistence type="inferred from homology"/>
<evidence type="ECO:0000255" key="1">
    <source>
        <dbReference type="HAMAP-Rule" id="MF_00011"/>
    </source>
</evidence>
<comment type="function">
    <text evidence="1">Plays an important role in the de novo pathway of purine nucleotide biosynthesis. Catalyzes the first committed step in the biosynthesis of AMP from IMP.</text>
</comment>
<comment type="catalytic activity">
    <reaction evidence="1">
        <text>IMP + L-aspartate + GTP = N(6)-(1,2-dicarboxyethyl)-AMP + GDP + phosphate + 2 H(+)</text>
        <dbReference type="Rhea" id="RHEA:15753"/>
        <dbReference type="ChEBI" id="CHEBI:15378"/>
        <dbReference type="ChEBI" id="CHEBI:29991"/>
        <dbReference type="ChEBI" id="CHEBI:37565"/>
        <dbReference type="ChEBI" id="CHEBI:43474"/>
        <dbReference type="ChEBI" id="CHEBI:57567"/>
        <dbReference type="ChEBI" id="CHEBI:58053"/>
        <dbReference type="ChEBI" id="CHEBI:58189"/>
        <dbReference type="EC" id="6.3.4.4"/>
    </reaction>
</comment>
<comment type="cofactor">
    <cofactor evidence="1">
        <name>Mg(2+)</name>
        <dbReference type="ChEBI" id="CHEBI:18420"/>
    </cofactor>
    <text evidence="1">Binds 1 Mg(2+) ion per subunit.</text>
</comment>
<comment type="pathway">
    <text evidence="1">Purine metabolism; AMP biosynthesis via de novo pathway; AMP from IMP: step 1/2.</text>
</comment>
<comment type="subunit">
    <text evidence="1">Homodimer.</text>
</comment>
<comment type="subcellular location">
    <subcellularLocation>
        <location evidence="1">Cytoplasm</location>
    </subcellularLocation>
</comment>
<comment type="similarity">
    <text evidence="1">Belongs to the adenylosuccinate synthetase family.</text>
</comment>
<feature type="chain" id="PRO_0000224298" description="Adenylosuccinate synthetase">
    <location>
        <begin position="1"/>
        <end position="431"/>
    </location>
</feature>
<feature type="active site" description="Proton acceptor" evidence="1">
    <location>
        <position position="14"/>
    </location>
</feature>
<feature type="active site" description="Proton donor" evidence="1">
    <location>
        <position position="42"/>
    </location>
</feature>
<feature type="binding site" evidence="1">
    <location>
        <begin position="13"/>
        <end position="19"/>
    </location>
    <ligand>
        <name>GTP</name>
        <dbReference type="ChEBI" id="CHEBI:37565"/>
    </ligand>
</feature>
<feature type="binding site" description="in other chain" evidence="1">
    <location>
        <begin position="14"/>
        <end position="17"/>
    </location>
    <ligand>
        <name>IMP</name>
        <dbReference type="ChEBI" id="CHEBI:58053"/>
        <note>ligand shared between dimeric partners</note>
    </ligand>
</feature>
<feature type="binding site" evidence="1">
    <location>
        <position position="14"/>
    </location>
    <ligand>
        <name>Mg(2+)</name>
        <dbReference type="ChEBI" id="CHEBI:18420"/>
    </ligand>
</feature>
<feature type="binding site" description="in other chain" evidence="1">
    <location>
        <begin position="39"/>
        <end position="42"/>
    </location>
    <ligand>
        <name>IMP</name>
        <dbReference type="ChEBI" id="CHEBI:58053"/>
        <note>ligand shared between dimeric partners</note>
    </ligand>
</feature>
<feature type="binding site" evidence="1">
    <location>
        <begin position="41"/>
        <end position="43"/>
    </location>
    <ligand>
        <name>GTP</name>
        <dbReference type="ChEBI" id="CHEBI:37565"/>
    </ligand>
</feature>
<feature type="binding site" evidence="1">
    <location>
        <position position="41"/>
    </location>
    <ligand>
        <name>Mg(2+)</name>
        <dbReference type="ChEBI" id="CHEBI:18420"/>
    </ligand>
</feature>
<feature type="binding site" description="in other chain" evidence="1">
    <location>
        <position position="130"/>
    </location>
    <ligand>
        <name>IMP</name>
        <dbReference type="ChEBI" id="CHEBI:58053"/>
        <note>ligand shared between dimeric partners</note>
    </ligand>
</feature>
<feature type="binding site" evidence="1">
    <location>
        <position position="144"/>
    </location>
    <ligand>
        <name>IMP</name>
        <dbReference type="ChEBI" id="CHEBI:58053"/>
        <note>ligand shared between dimeric partners</note>
    </ligand>
</feature>
<feature type="binding site" description="in other chain" evidence="1">
    <location>
        <position position="225"/>
    </location>
    <ligand>
        <name>IMP</name>
        <dbReference type="ChEBI" id="CHEBI:58053"/>
        <note>ligand shared between dimeric partners</note>
    </ligand>
</feature>
<feature type="binding site" description="in other chain" evidence="1">
    <location>
        <position position="240"/>
    </location>
    <ligand>
        <name>IMP</name>
        <dbReference type="ChEBI" id="CHEBI:58053"/>
        <note>ligand shared between dimeric partners</note>
    </ligand>
</feature>
<feature type="binding site" evidence="1">
    <location>
        <begin position="300"/>
        <end position="306"/>
    </location>
    <ligand>
        <name>substrate</name>
    </ligand>
</feature>
<feature type="binding site" description="in other chain" evidence="1">
    <location>
        <position position="304"/>
    </location>
    <ligand>
        <name>IMP</name>
        <dbReference type="ChEBI" id="CHEBI:58053"/>
        <note>ligand shared between dimeric partners</note>
    </ligand>
</feature>
<feature type="binding site" evidence="1">
    <location>
        <position position="306"/>
    </location>
    <ligand>
        <name>GTP</name>
        <dbReference type="ChEBI" id="CHEBI:37565"/>
    </ligand>
</feature>
<feature type="binding site" evidence="1">
    <location>
        <begin position="332"/>
        <end position="334"/>
    </location>
    <ligand>
        <name>GTP</name>
        <dbReference type="ChEBI" id="CHEBI:37565"/>
    </ligand>
</feature>
<feature type="binding site" evidence="1">
    <location>
        <begin position="414"/>
        <end position="416"/>
    </location>
    <ligand>
        <name>GTP</name>
        <dbReference type="ChEBI" id="CHEBI:37565"/>
    </ligand>
</feature>
<sequence>MAKNVVVVGCQWGDEGKGKLVDLLTDRVGAVVRFQGGHNAGHTLVIKGKKTILHLVPSGILRNNVLCVIGNGVVLSPSALMEEIRMLEQEGVPAQERLKISPACPLVLPYHVALDQARETARGERAIGTTGRGIGPAYEDKVARRTLRVGDLSDENRFAANLAEIMDYHNFILRDYYQAEVVSYEQVLEQALEFKAKFSHLVTDVPMLLAKLRREGKNILFEGAQGAFLDIDHGTYPFVTSSNTTAGSAATGSGVGPHDLDCVVGITKAYATRVGHGPFPTELEDDTGAHLAQRGQEFGATTHRPRRCGWLDLVALRRAAIINSISSLCITKLDVLDGLKRLCLCVAYHYNEEQCSEMPLDSDALVRCKPIYMELLGWQESTVGITEYEQLPLAARLYLEKIEELSGVPIDIISTGADREQTIILRDPYGI</sequence>
<name>PURA_NITOC</name>
<keyword id="KW-0963">Cytoplasm</keyword>
<keyword id="KW-0342">GTP-binding</keyword>
<keyword id="KW-0436">Ligase</keyword>
<keyword id="KW-0460">Magnesium</keyword>
<keyword id="KW-0479">Metal-binding</keyword>
<keyword id="KW-0547">Nucleotide-binding</keyword>
<keyword id="KW-0658">Purine biosynthesis</keyword>
<keyword id="KW-1185">Reference proteome</keyword>
<dbReference type="EC" id="6.3.4.4" evidence="1"/>
<dbReference type="EMBL" id="CP000127">
    <property type="protein sequence ID" value="ABA59038.1"/>
    <property type="molecule type" value="Genomic_DNA"/>
</dbReference>
<dbReference type="RefSeq" id="WP_004269198.1">
    <property type="nucleotide sequence ID" value="NC_007484.1"/>
</dbReference>
<dbReference type="SMR" id="Q3J808"/>
<dbReference type="FunCoup" id="Q3J808">
    <property type="interactions" value="588"/>
</dbReference>
<dbReference type="STRING" id="323261.Noc_2585"/>
<dbReference type="KEGG" id="noc:Noc_2585"/>
<dbReference type="eggNOG" id="COG0104">
    <property type="taxonomic scope" value="Bacteria"/>
</dbReference>
<dbReference type="HOGENOM" id="CLU_029848_0_0_6"/>
<dbReference type="InParanoid" id="Q3J808"/>
<dbReference type="UniPathway" id="UPA00075">
    <property type="reaction ID" value="UER00335"/>
</dbReference>
<dbReference type="Proteomes" id="UP000006838">
    <property type="component" value="Chromosome"/>
</dbReference>
<dbReference type="GO" id="GO:0005737">
    <property type="term" value="C:cytoplasm"/>
    <property type="evidence" value="ECO:0007669"/>
    <property type="project" value="UniProtKB-SubCell"/>
</dbReference>
<dbReference type="GO" id="GO:0004019">
    <property type="term" value="F:adenylosuccinate synthase activity"/>
    <property type="evidence" value="ECO:0007669"/>
    <property type="project" value="UniProtKB-UniRule"/>
</dbReference>
<dbReference type="GO" id="GO:0005525">
    <property type="term" value="F:GTP binding"/>
    <property type="evidence" value="ECO:0007669"/>
    <property type="project" value="UniProtKB-UniRule"/>
</dbReference>
<dbReference type="GO" id="GO:0000287">
    <property type="term" value="F:magnesium ion binding"/>
    <property type="evidence" value="ECO:0007669"/>
    <property type="project" value="UniProtKB-UniRule"/>
</dbReference>
<dbReference type="GO" id="GO:0044208">
    <property type="term" value="P:'de novo' AMP biosynthetic process"/>
    <property type="evidence" value="ECO:0007669"/>
    <property type="project" value="UniProtKB-UniRule"/>
</dbReference>
<dbReference type="GO" id="GO:0046040">
    <property type="term" value="P:IMP metabolic process"/>
    <property type="evidence" value="ECO:0007669"/>
    <property type="project" value="TreeGrafter"/>
</dbReference>
<dbReference type="CDD" id="cd03108">
    <property type="entry name" value="AdSS"/>
    <property type="match status" value="1"/>
</dbReference>
<dbReference type="FunFam" id="1.10.300.10:FF:000001">
    <property type="entry name" value="Adenylosuccinate synthetase"/>
    <property type="match status" value="1"/>
</dbReference>
<dbReference type="FunFam" id="3.90.170.10:FF:000001">
    <property type="entry name" value="Adenylosuccinate synthetase"/>
    <property type="match status" value="1"/>
</dbReference>
<dbReference type="Gene3D" id="3.40.440.10">
    <property type="entry name" value="Adenylosuccinate Synthetase, subunit A, domain 1"/>
    <property type="match status" value="1"/>
</dbReference>
<dbReference type="Gene3D" id="1.10.300.10">
    <property type="entry name" value="Adenylosuccinate Synthetase, subunit A, domain 2"/>
    <property type="match status" value="1"/>
</dbReference>
<dbReference type="Gene3D" id="3.90.170.10">
    <property type="entry name" value="Adenylosuccinate Synthetase, subunit A, domain 3"/>
    <property type="match status" value="1"/>
</dbReference>
<dbReference type="HAMAP" id="MF_00011">
    <property type="entry name" value="Adenylosucc_synth"/>
    <property type="match status" value="1"/>
</dbReference>
<dbReference type="InterPro" id="IPR018220">
    <property type="entry name" value="Adenylosuccin_syn_GTP-bd"/>
</dbReference>
<dbReference type="InterPro" id="IPR033128">
    <property type="entry name" value="Adenylosuccin_syn_Lys_AS"/>
</dbReference>
<dbReference type="InterPro" id="IPR042109">
    <property type="entry name" value="Adenylosuccinate_synth_dom1"/>
</dbReference>
<dbReference type="InterPro" id="IPR042110">
    <property type="entry name" value="Adenylosuccinate_synth_dom2"/>
</dbReference>
<dbReference type="InterPro" id="IPR042111">
    <property type="entry name" value="Adenylosuccinate_synth_dom3"/>
</dbReference>
<dbReference type="InterPro" id="IPR001114">
    <property type="entry name" value="Adenylosuccinate_synthetase"/>
</dbReference>
<dbReference type="InterPro" id="IPR027417">
    <property type="entry name" value="P-loop_NTPase"/>
</dbReference>
<dbReference type="NCBIfam" id="NF002223">
    <property type="entry name" value="PRK01117.1"/>
    <property type="match status" value="1"/>
</dbReference>
<dbReference type="NCBIfam" id="TIGR00184">
    <property type="entry name" value="purA"/>
    <property type="match status" value="1"/>
</dbReference>
<dbReference type="PANTHER" id="PTHR11846">
    <property type="entry name" value="ADENYLOSUCCINATE SYNTHETASE"/>
    <property type="match status" value="1"/>
</dbReference>
<dbReference type="PANTHER" id="PTHR11846:SF0">
    <property type="entry name" value="ADENYLOSUCCINATE SYNTHETASE"/>
    <property type="match status" value="1"/>
</dbReference>
<dbReference type="Pfam" id="PF00709">
    <property type="entry name" value="Adenylsucc_synt"/>
    <property type="match status" value="1"/>
</dbReference>
<dbReference type="SMART" id="SM00788">
    <property type="entry name" value="Adenylsucc_synt"/>
    <property type="match status" value="1"/>
</dbReference>
<dbReference type="SUPFAM" id="SSF52540">
    <property type="entry name" value="P-loop containing nucleoside triphosphate hydrolases"/>
    <property type="match status" value="1"/>
</dbReference>
<dbReference type="PROSITE" id="PS01266">
    <property type="entry name" value="ADENYLOSUCCIN_SYN_1"/>
    <property type="match status" value="1"/>
</dbReference>
<dbReference type="PROSITE" id="PS00513">
    <property type="entry name" value="ADENYLOSUCCIN_SYN_2"/>
    <property type="match status" value="1"/>
</dbReference>
<accession>Q3J808</accession>
<organism>
    <name type="scientific">Nitrosococcus oceani (strain ATCC 19707 / BCRC 17464 / JCM 30415 / NCIMB 11848 / C-107)</name>
    <dbReference type="NCBI Taxonomy" id="323261"/>
    <lineage>
        <taxon>Bacteria</taxon>
        <taxon>Pseudomonadati</taxon>
        <taxon>Pseudomonadota</taxon>
        <taxon>Gammaproteobacteria</taxon>
        <taxon>Chromatiales</taxon>
        <taxon>Chromatiaceae</taxon>
        <taxon>Nitrosococcus</taxon>
    </lineage>
</organism>
<reference key="1">
    <citation type="journal article" date="2006" name="Appl. Environ. Microbiol.">
        <title>Complete genome sequence of the marine, chemolithoautotrophic, ammonia-oxidizing bacterium Nitrosococcus oceani ATCC 19707.</title>
        <authorList>
            <person name="Klotz M.G."/>
            <person name="Arp D.J."/>
            <person name="Chain P.S.G."/>
            <person name="El-Sheikh A.F."/>
            <person name="Hauser L.J."/>
            <person name="Hommes N.G."/>
            <person name="Larimer F.W."/>
            <person name="Malfatti S.A."/>
            <person name="Norton J.M."/>
            <person name="Poret-Peterson A.T."/>
            <person name="Vergez L.M."/>
            <person name="Ward B.B."/>
        </authorList>
    </citation>
    <scope>NUCLEOTIDE SEQUENCE [LARGE SCALE GENOMIC DNA]</scope>
    <source>
        <strain>ATCC 19707 / BCRC 17464 / JCM 30415 / NCIMB 11848 / C-107</strain>
    </source>
</reference>
<protein>
    <recommendedName>
        <fullName evidence="1">Adenylosuccinate synthetase</fullName>
        <shortName evidence="1">AMPSase</shortName>
        <shortName evidence="1">AdSS</shortName>
        <ecNumber evidence="1">6.3.4.4</ecNumber>
    </recommendedName>
    <alternativeName>
        <fullName evidence="1">IMP--aspartate ligase</fullName>
    </alternativeName>
</protein>